<accession>Q7VKG1</accession>
<organism>
    <name type="scientific">Haemophilus ducreyi (strain 35000HP / ATCC 700724)</name>
    <dbReference type="NCBI Taxonomy" id="233412"/>
    <lineage>
        <taxon>Bacteria</taxon>
        <taxon>Pseudomonadati</taxon>
        <taxon>Pseudomonadota</taxon>
        <taxon>Gammaproteobacteria</taxon>
        <taxon>Pasteurellales</taxon>
        <taxon>Pasteurellaceae</taxon>
        <taxon>Haemophilus</taxon>
    </lineage>
</organism>
<dbReference type="EMBL" id="AE017143">
    <property type="protein sequence ID" value="AAP96668.1"/>
    <property type="molecule type" value="Genomic_DNA"/>
</dbReference>
<dbReference type="RefSeq" id="WP_010945695.1">
    <property type="nucleotide sequence ID" value="NC_002940.2"/>
</dbReference>
<dbReference type="SMR" id="Q7VKG1"/>
<dbReference type="STRING" id="233412.HD_1948"/>
<dbReference type="KEGG" id="hdu:HD_1948"/>
<dbReference type="eggNOG" id="COG0806">
    <property type="taxonomic scope" value="Bacteria"/>
</dbReference>
<dbReference type="HOGENOM" id="CLU_077636_1_0_6"/>
<dbReference type="OrthoDB" id="9783509at2"/>
<dbReference type="Proteomes" id="UP000001022">
    <property type="component" value="Chromosome"/>
</dbReference>
<dbReference type="GO" id="GO:0005737">
    <property type="term" value="C:cytoplasm"/>
    <property type="evidence" value="ECO:0007669"/>
    <property type="project" value="UniProtKB-SubCell"/>
</dbReference>
<dbReference type="GO" id="GO:0005840">
    <property type="term" value="C:ribosome"/>
    <property type="evidence" value="ECO:0007669"/>
    <property type="project" value="InterPro"/>
</dbReference>
<dbReference type="GO" id="GO:0043022">
    <property type="term" value="F:ribosome binding"/>
    <property type="evidence" value="ECO:0007669"/>
    <property type="project" value="InterPro"/>
</dbReference>
<dbReference type="GO" id="GO:0042274">
    <property type="term" value="P:ribosomal small subunit biogenesis"/>
    <property type="evidence" value="ECO:0007669"/>
    <property type="project" value="UniProtKB-UniRule"/>
</dbReference>
<dbReference type="GO" id="GO:0006364">
    <property type="term" value="P:rRNA processing"/>
    <property type="evidence" value="ECO:0007669"/>
    <property type="project" value="UniProtKB-UniRule"/>
</dbReference>
<dbReference type="Gene3D" id="2.30.30.240">
    <property type="entry name" value="PRC-barrel domain"/>
    <property type="match status" value="1"/>
</dbReference>
<dbReference type="Gene3D" id="2.40.30.60">
    <property type="entry name" value="RimM"/>
    <property type="match status" value="1"/>
</dbReference>
<dbReference type="HAMAP" id="MF_00014">
    <property type="entry name" value="Ribosome_mat_RimM"/>
    <property type="match status" value="1"/>
</dbReference>
<dbReference type="InterPro" id="IPR011033">
    <property type="entry name" value="PRC_barrel-like_sf"/>
</dbReference>
<dbReference type="InterPro" id="IPR056792">
    <property type="entry name" value="PRC_RimM"/>
</dbReference>
<dbReference type="InterPro" id="IPR011961">
    <property type="entry name" value="RimM"/>
</dbReference>
<dbReference type="InterPro" id="IPR002676">
    <property type="entry name" value="RimM_N"/>
</dbReference>
<dbReference type="InterPro" id="IPR036976">
    <property type="entry name" value="RimM_N_sf"/>
</dbReference>
<dbReference type="InterPro" id="IPR009000">
    <property type="entry name" value="Transl_B-barrel_sf"/>
</dbReference>
<dbReference type="NCBIfam" id="TIGR02273">
    <property type="entry name" value="16S_RimM"/>
    <property type="match status" value="1"/>
</dbReference>
<dbReference type="PANTHER" id="PTHR33692">
    <property type="entry name" value="RIBOSOME MATURATION FACTOR RIMM"/>
    <property type="match status" value="1"/>
</dbReference>
<dbReference type="PANTHER" id="PTHR33692:SF1">
    <property type="entry name" value="RIBOSOME MATURATION FACTOR RIMM"/>
    <property type="match status" value="1"/>
</dbReference>
<dbReference type="Pfam" id="PF24986">
    <property type="entry name" value="PRC_RimM"/>
    <property type="match status" value="1"/>
</dbReference>
<dbReference type="Pfam" id="PF01782">
    <property type="entry name" value="RimM"/>
    <property type="match status" value="1"/>
</dbReference>
<dbReference type="SUPFAM" id="SSF50346">
    <property type="entry name" value="PRC-barrel domain"/>
    <property type="match status" value="1"/>
</dbReference>
<dbReference type="SUPFAM" id="SSF50447">
    <property type="entry name" value="Translation proteins"/>
    <property type="match status" value="1"/>
</dbReference>
<proteinExistence type="inferred from homology"/>
<comment type="function">
    <text evidence="1">An accessory protein needed during the final step in the assembly of 30S ribosomal subunit, possibly for assembly of the head region. Essential for efficient processing of 16S rRNA. May be needed both before and after RbfA during the maturation of 16S rRNA. It has affinity for free ribosomal 30S subunits but not for 70S ribosomes.</text>
</comment>
<comment type="subunit">
    <text evidence="1">Binds ribosomal protein uS19.</text>
</comment>
<comment type="subcellular location">
    <subcellularLocation>
        <location evidence="1">Cytoplasm</location>
    </subcellularLocation>
</comment>
<comment type="domain">
    <text evidence="1">The PRC barrel domain binds ribosomal protein uS19.</text>
</comment>
<comment type="similarity">
    <text evidence="1">Belongs to the RimM family.</text>
</comment>
<reference key="1">
    <citation type="submission" date="2003-06" db="EMBL/GenBank/DDBJ databases">
        <title>The complete genome sequence of Haemophilus ducreyi.</title>
        <authorList>
            <person name="Munson R.S. Jr."/>
            <person name="Ray W.C."/>
            <person name="Mahairas G."/>
            <person name="Sabo P."/>
            <person name="Mungur R."/>
            <person name="Johnson L."/>
            <person name="Nguyen D."/>
            <person name="Wang J."/>
            <person name="Forst C."/>
            <person name="Hood L."/>
        </authorList>
    </citation>
    <scope>NUCLEOTIDE SEQUENCE [LARGE SCALE GENOMIC DNA]</scope>
    <source>
        <strain>35000HP / ATCC 700724</strain>
    </source>
</reference>
<name>RIMM_HAEDU</name>
<gene>
    <name evidence="1" type="primary">rimM</name>
    <name type="ordered locus">HD_1948</name>
</gene>
<evidence type="ECO:0000255" key="1">
    <source>
        <dbReference type="HAMAP-Rule" id="MF_00014"/>
    </source>
</evidence>
<sequence>MSEQKIEVVGKLGSTYGIRGWLRLYSSTEKAESIFDYQPWFLKIKGQWQLIELESWRYHSNDLIVKLKGTEDREAAQLLTNAEIGVDLSVFPKLGEEDYYWHDLINCQVVNLENYTMGVVTELMETGSNDVLVVRANSKDAFGKQERLIPFLYKQVVKRVDLSTKTITVDWDAGF</sequence>
<keyword id="KW-0143">Chaperone</keyword>
<keyword id="KW-0963">Cytoplasm</keyword>
<keyword id="KW-1185">Reference proteome</keyword>
<keyword id="KW-0690">Ribosome biogenesis</keyword>
<keyword id="KW-0698">rRNA processing</keyword>
<protein>
    <recommendedName>
        <fullName evidence="1">Ribosome maturation factor RimM</fullName>
    </recommendedName>
</protein>
<feature type="chain" id="PRO_0000163296" description="Ribosome maturation factor RimM">
    <location>
        <begin position="1"/>
        <end position="175"/>
    </location>
</feature>
<feature type="domain" description="PRC barrel" evidence="1">
    <location>
        <begin position="96"/>
        <end position="175"/>
    </location>
</feature>